<keyword id="KW-0046">Antibiotic resistance</keyword>
<sequence>MKMLFPALPGLLLIASGYGIAEQTLLPVAQNSRDVMLLPCVGDPPNDLHPVSVNSDKSDELGVPYYNDQHL</sequence>
<feature type="chain" id="PRO_0000096242" description="Multiple antibiotic resistance protein MarB">
    <location>
        <begin position="1"/>
        <end position="71"/>
    </location>
</feature>
<accession>P0A215</accession>
<accession>Q56071</accession>
<proteinExistence type="predicted"/>
<organism>
    <name type="scientific">Salmonella typhi</name>
    <dbReference type="NCBI Taxonomy" id="90370"/>
    <lineage>
        <taxon>Bacteria</taxon>
        <taxon>Pseudomonadati</taxon>
        <taxon>Pseudomonadota</taxon>
        <taxon>Gammaproteobacteria</taxon>
        <taxon>Enterobacterales</taxon>
        <taxon>Enterobacteriaceae</taxon>
        <taxon>Salmonella</taxon>
    </lineage>
</organism>
<protein>
    <recommendedName>
        <fullName>Multiple antibiotic resistance protein MarB</fullName>
    </recommendedName>
</protein>
<gene>
    <name type="primary">marB</name>
    <name type="ordered locus">STY1542</name>
    <name type="ordered locus">t1439</name>
</gene>
<dbReference type="EMBL" id="AL513382">
    <property type="protein sequence ID" value="CAD01795.1"/>
    <property type="molecule type" value="Genomic_DNA"/>
</dbReference>
<dbReference type="EMBL" id="AE014613">
    <property type="protein sequence ID" value="AAO69081.1"/>
    <property type="molecule type" value="Genomic_DNA"/>
</dbReference>
<dbReference type="RefSeq" id="NP_455962.1">
    <property type="nucleotide sequence ID" value="NC_003198.1"/>
</dbReference>
<dbReference type="RefSeq" id="WP_000783049.1">
    <property type="nucleotide sequence ID" value="NZ_WSUR01000006.1"/>
</dbReference>
<dbReference type="STRING" id="220341.gene:17585485"/>
<dbReference type="KEGG" id="stt:t1439"/>
<dbReference type="KEGG" id="sty:STY1542"/>
<dbReference type="PATRIC" id="fig|220341.7.peg.1551"/>
<dbReference type="eggNOG" id="ENOG50330WV">
    <property type="taxonomic scope" value="Bacteria"/>
</dbReference>
<dbReference type="HOGENOM" id="CLU_194634_0_0_6"/>
<dbReference type="OMA" id="HMGAGSD"/>
<dbReference type="OrthoDB" id="6566500at2"/>
<dbReference type="Proteomes" id="UP000000541">
    <property type="component" value="Chromosome"/>
</dbReference>
<dbReference type="Proteomes" id="UP000002670">
    <property type="component" value="Chromosome"/>
</dbReference>
<dbReference type="GO" id="GO:0046677">
    <property type="term" value="P:response to antibiotic"/>
    <property type="evidence" value="ECO:0007669"/>
    <property type="project" value="UniProtKB-KW"/>
</dbReference>
<dbReference type="InterPro" id="IPR025732">
    <property type="entry name" value="MarB"/>
</dbReference>
<dbReference type="NCBIfam" id="NF007508">
    <property type="entry name" value="PRK10106.1"/>
    <property type="match status" value="1"/>
</dbReference>
<dbReference type="Pfam" id="PF13999">
    <property type="entry name" value="MarB"/>
    <property type="match status" value="1"/>
</dbReference>
<reference key="1">
    <citation type="journal article" date="2001" name="Nature">
        <title>Complete genome sequence of a multiple drug resistant Salmonella enterica serovar Typhi CT18.</title>
        <authorList>
            <person name="Parkhill J."/>
            <person name="Dougan G."/>
            <person name="James K.D."/>
            <person name="Thomson N.R."/>
            <person name="Pickard D."/>
            <person name="Wain J."/>
            <person name="Churcher C.M."/>
            <person name="Mungall K.L."/>
            <person name="Bentley S.D."/>
            <person name="Holden M.T.G."/>
            <person name="Sebaihia M."/>
            <person name="Baker S."/>
            <person name="Basham D."/>
            <person name="Brooks K."/>
            <person name="Chillingworth T."/>
            <person name="Connerton P."/>
            <person name="Cronin A."/>
            <person name="Davis P."/>
            <person name="Davies R.M."/>
            <person name="Dowd L."/>
            <person name="White N."/>
            <person name="Farrar J."/>
            <person name="Feltwell T."/>
            <person name="Hamlin N."/>
            <person name="Haque A."/>
            <person name="Hien T.T."/>
            <person name="Holroyd S."/>
            <person name="Jagels K."/>
            <person name="Krogh A."/>
            <person name="Larsen T.S."/>
            <person name="Leather S."/>
            <person name="Moule S."/>
            <person name="O'Gaora P."/>
            <person name="Parry C."/>
            <person name="Quail M.A."/>
            <person name="Rutherford K.M."/>
            <person name="Simmonds M."/>
            <person name="Skelton J."/>
            <person name="Stevens K."/>
            <person name="Whitehead S."/>
            <person name="Barrell B.G."/>
        </authorList>
    </citation>
    <scope>NUCLEOTIDE SEQUENCE [LARGE SCALE GENOMIC DNA]</scope>
    <source>
        <strain>CT18</strain>
    </source>
</reference>
<reference key="2">
    <citation type="journal article" date="2003" name="J. Bacteriol.">
        <title>Comparative genomics of Salmonella enterica serovar Typhi strains Ty2 and CT18.</title>
        <authorList>
            <person name="Deng W."/>
            <person name="Liou S.-R."/>
            <person name="Plunkett G. III"/>
            <person name="Mayhew G.F."/>
            <person name="Rose D.J."/>
            <person name="Burland V."/>
            <person name="Kodoyianni V."/>
            <person name="Schwartz D.C."/>
            <person name="Blattner F.R."/>
        </authorList>
    </citation>
    <scope>NUCLEOTIDE SEQUENCE [LARGE SCALE GENOMIC DNA]</scope>
    <source>
        <strain>ATCC 700931 / Ty2</strain>
    </source>
</reference>
<name>MARB_SALTI</name>